<comment type="function">
    <text evidence="1">Part of the outer membrane protein assembly complex, which is involved in assembly and insertion of beta-barrel proteins into the outer membrane.</text>
</comment>
<comment type="subunit">
    <text evidence="1">Part of the Bam complex, which is composed of the outer membrane protein BamA, and four lipoproteins BamB, BamC, BamD and BamE.</text>
</comment>
<comment type="subcellular location">
    <subcellularLocation>
        <location evidence="1">Cell outer membrane</location>
        <topology evidence="1">Lipid-anchor</topology>
    </subcellularLocation>
</comment>
<comment type="similarity">
    <text evidence="1">Belongs to the BamC family.</text>
</comment>
<name>BAMC_XENNA</name>
<keyword id="KW-0998">Cell outer membrane</keyword>
<keyword id="KW-0449">Lipoprotein</keyword>
<keyword id="KW-0472">Membrane</keyword>
<keyword id="KW-0564">Palmitate</keyword>
<keyword id="KW-1185">Reference proteome</keyword>
<keyword id="KW-0732">Signal</keyword>
<dbReference type="EMBL" id="FN667742">
    <property type="protein sequence ID" value="CBJ90716.1"/>
    <property type="molecule type" value="Genomic_DNA"/>
</dbReference>
<dbReference type="RefSeq" id="WP_010847444.1">
    <property type="nucleotide sequence ID" value="NC_014228.1"/>
</dbReference>
<dbReference type="SMR" id="D3VI76"/>
<dbReference type="STRING" id="406817.XNC1_2662"/>
<dbReference type="GeneID" id="24903302"/>
<dbReference type="KEGG" id="xne:XNC1_2662"/>
<dbReference type="eggNOG" id="COG3317">
    <property type="taxonomic scope" value="Bacteria"/>
</dbReference>
<dbReference type="HOGENOM" id="CLU_063217_1_0_6"/>
<dbReference type="Proteomes" id="UP000008075">
    <property type="component" value="Chromosome"/>
</dbReference>
<dbReference type="GO" id="GO:0009279">
    <property type="term" value="C:cell outer membrane"/>
    <property type="evidence" value="ECO:0007669"/>
    <property type="project" value="UniProtKB-SubCell"/>
</dbReference>
<dbReference type="GO" id="GO:0043165">
    <property type="term" value="P:Gram-negative-bacterium-type cell outer membrane assembly"/>
    <property type="evidence" value="ECO:0007669"/>
    <property type="project" value="UniProtKB-UniRule"/>
</dbReference>
<dbReference type="GO" id="GO:0051205">
    <property type="term" value="P:protein insertion into membrane"/>
    <property type="evidence" value="ECO:0007669"/>
    <property type="project" value="UniProtKB-UniRule"/>
</dbReference>
<dbReference type="Gene3D" id="3.30.530.50">
    <property type="match status" value="1"/>
</dbReference>
<dbReference type="Gene3D" id="3.30.310.170">
    <property type="entry name" value="Outer membrane protein assembly factor BamC"/>
    <property type="match status" value="1"/>
</dbReference>
<dbReference type="HAMAP" id="MF_00924">
    <property type="entry name" value="OM_assembly_BamC"/>
    <property type="match status" value="1"/>
</dbReference>
<dbReference type="InterPro" id="IPR014524">
    <property type="entry name" value="BamC"/>
</dbReference>
<dbReference type="InterPro" id="IPR042268">
    <property type="entry name" value="BamC_C"/>
</dbReference>
<dbReference type="InterPro" id="IPR010653">
    <property type="entry name" value="NlpB/DapX"/>
</dbReference>
<dbReference type="NCBIfam" id="NF008674">
    <property type="entry name" value="PRK11679.1"/>
    <property type="match status" value="1"/>
</dbReference>
<dbReference type="Pfam" id="PF06804">
    <property type="entry name" value="Lipoprotein_18"/>
    <property type="match status" value="1"/>
</dbReference>
<dbReference type="PIRSF" id="PIRSF026343">
    <property type="entry name" value="NlpB"/>
    <property type="match status" value="1"/>
</dbReference>
<sequence length="348" mass="38021">MATLLQTSKVMKVAGLSLVVFLAACSSDQRYKRQVNGDESYLETPPLKTLNIPGGMILPLQNGEYDVPSATSTGAVGKELDIRPPLQALALLTGSRIENSAQSSKLLLENTSEYSKLWSQVVSLLAKKNYQISQKDEAAQTLTTDWITWQRADENVPYQGRYHVSVSQQDYQTTLSVSSDGLKQGEQDITDPAAIQRYNVLMLNELAGGLSQQQEEAGQNNAKDSGALTVQSGSDNTGLAQIIVRAPYNVVWNRLPYALESIGMQVTDRTRSTGSIAVTYKGRSSSDWKALGVEEPSVREGNYKLQVGDLDNRSSLQFISEKGKPLTQSENDQMVAVLEAAFSKSTDK</sequence>
<feature type="signal peptide" evidence="1">
    <location>
        <begin position="1"/>
        <end position="24"/>
    </location>
</feature>
<feature type="chain" id="PRO_0000417826" description="Outer membrane protein assembly factor BamC">
    <location>
        <begin position="25"/>
        <end position="348"/>
    </location>
</feature>
<feature type="region of interest" description="Disordered" evidence="2">
    <location>
        <begin position="211"/>
        <end position="230"/>
    </location>
</feature>
<feature type="lipid moiety-binding region" description="N-palmitoyl cysteine" evidence="1">
    <location>
        <position position="25"/>
    </location>
</feature>
<feature type="lipid moiety-binding region" description="S-diacylglycerol cysteine" evidence="1">
    <location>
        <position position="25"/>
    </location>
</feature>
<protein>
    <recommendedName>
        <fullName evidence="1">Outer membrane protein assembly factor BamC</fullName>
    </recommendedName>
</protein>
<reference key="1">
    <citation type="journal article" date="2011" name="PLoS ONE">
        <title>The entomopathogenic bacterial endosymbionts xenorhabdus and photorhabdus: convergent lifestyles from divergent genomes.</title>
        <authorList>
            <person name="Chaston J.M."/>
            <person name="Suen G."/>
            <person name="Tucker S.L."/>
            <person name="Andersen A.W."/>
            <person name="Bhasin A."/>
            <person name="Bode E."/>
            <person name="Bode H.B."/>
            <person name="Brachmann A.O."/>
            <person name="Cowles C.E."/>
            <person name="Cowles K.N."/>
            <person name="Darby C."/>
            <person name="de Leon L."/>
            <person name="Drace K."/>
            <person name="Du Z."/>
            <person name="Givaudan A."/>
            <person name="Herbert Tran E.E."/>
            <person name="Jewell K.A."/>
            <person name="Knack J.J."/>
            <person name="Krasomil-Osterfeld K.C."/>
            <person name="Kukor R."/>
            <person name="Lanois A."/>
            <person name="Latreille P."/>
            <person name="Leimgruber N.K."/>
            <person name="Lipke C.M."/>
            <person name="Liu R."/>
            <person name="Lu X."/>
            <person name="Martens E.C."/>
            <person name="Marri P.R."/>
            <person name="Medigue C."/>
            <person name="Menard M.L."/>
            <person name="Miller N.M."/>
            <person name="Morales-Soto N."/>
            <person name="Norton S."/>
            <person name="Ogier J.C."/>
            <person name="Orchard S.S."/>
            <person name="Park D."/>
            <person name="Park Y."/>
            <person name="Qurollo B.A."/>
            <person name="Sugar D.R."/>
            <person name="Richards G.R."/>
            <person name="Rouy Z."/>
            <person name="Slominski B."/>
            <person name="Slominski K."/>
            <person name="Snyder H."/>
            <person name="Tjaden B.C."/>
            <person name="van der Hoeven R."/>
            <person name="Welch R.D."/>
            <person name="Wheeler C."/>
            <person name="Xiang B."/>
            <person name="Barbazuk B."/>
            <person name="Gaudriault S."/>
            <person name="Goodner B."/>
            <person name="Slater S.C."/>
            <person name="Forst S."/>
            <person name="Goldman B.S."/>
            <person name="Goodrich-Blair H."/>
        </authorList>
    </citation>
    <scope>NUCLEOTIDE SEQUENCE [LARGE SCALE GENOMIC DNA]</scope>
    <source>
        <strain>ATCC 19061 / DSM 3370 / CCUG 14189 / LMG 1036 / NCIMB 9965 / AN6</strain>
    </source>
</reference>
<evidence type="ECO:0000255" key="1">
    <source>
        <dbReference type="HAMAP-Rule" id="MF_00924"/>
    </source>
</evidence>
<evidence type="ECO:0000256" key="2">
    <source>
        <dbReference type="SAM" id="MobiDB-lite"/>
    </source>
</evidence>
<accession>D3VI76</accession>
<proteinExistence type="inferred from homology"/>
<gene>
    <name evidence="1" type="primary">bamC</name>
    <name type="synonym">nlpB</name>
    <name type="ordered locus">XNC1_2662</name>
</gene>
<organism>
    <name type="scientific">Xenorhabdus nematophila (strain ATCC 19061 / DSM 3370 / CCUG 14189 / LMG 1036 / NCIMB 9965 / AN6)</name>
    <dbReference type="NCBI Taxonomy" id="406817"/>
    <lineage>
        <taxon>Bacteria</taxon>
        <taxon>Pseudomonadati</taxon>
        <taxon>Pseudomonadota</taxon>
        <taxon>Gammaproteobacteria</taxon>
        <taxon>Enterobacterales</taxon>
        <taxon>Morganellaceae</taxon>
        <taxon>Xenorhabdus</taxon>
    </lineage>
</organism>